<reference key="1">
    <citation type="journal article" date="2000" name="Nature">
        <title>Complete DNA sequence of a serogroup A strain of Neisseria meningitidis Z2491.</title>
        <authorList>
            <person name="Parkhill J."/>
            <person name="Achtman M."/>
            <person name="James K.D."/>
            <person name="Bentley S.D."/>
            <person name="Churcher C.M."/>
            <person name="Klee S.R."/>
            <person name="Morelli G."/>
            <person name="Basham D."/>
            <person name="Brown D."/>
            <person name="Chillingworth T."/>
            <person name="Davies R.M."/>
            <person name="Davis P."/>
            <person name="Devlin K."/>
            <person name="Feltwell T."/>
            <person name="Hamlin N."/>
            <person name="Holroyd S."/>
            <person name="Jagels K."/>
            <person name="Leather S."/>
            <person name="Moule S."/>
            <person name="Mungall K.L."/>
            <person name="Quail M.A."/>
            <person name="Rajandream M.A."/>
            <person name="Rutherford K.M."/>
            <person name="Simmonds M."/>
            <person name="Skelton J."/>
            <person name="Whitehead S."/>
            <person name="Spratt B.G."/>
            <person name="Barrell B.G."/>
        </authorList>
    </citation>
    <scope>NUCLEOTIDE SEQUENCE [LARGE SCALE GENOMIC DNA]</scope>
    <source>
        <strain>DSM 15465 / Z2491</strain>
    </source>
</reference>
<proteinExistence type="inferred from homology"/>
<protein>
    <recommendedName>
        <fullName evidence="1">Transcription antitermination protein NusB</fullName>
    </recommendedName>
    <alternativeName>
        <fullName evidence="1">Antitermination factor NusB</fullName>
    </alternativeName>
</protein>
<accession>Q9JVD5</accession>
<accession>A1IQT6</accession>
<dbReference type="EMBL" id="AL157959">
    <property type="protein sequence ID" value="CAM08120.1"/>
    <property type="molecule type" value="Genomic_DNA"/>
</dbReference>
<dbReference type="PIR" id="H81934">
    <property type="entry name" value="H81934"/>
</dbReference>
<dbReference type="RefSeq" id="WP_002229182.1">
    <property type="nucleotide sequence ID" value="NC_003116.1"/>
</dbReference>
<dbReference type="SMR" id="Q9JVD5"/>
<dbReference type="EnsemblBacteria" id="CAM08120">
    <property type="protein sequence ID" value="CAM08120"/>
    <property type="gene ID" value="NMA0885"/>
</dbReference>
<dbReference type="GeneID" id="93386491"/>
<dbReference type="KEGG" id="nma:NMA0885"/>
<dbReference type="HOGENOM" id="CLU_087843_4_1_4"/>
<dbReference type="Proteomes" id="UP000000626">
    <property type="component" value="Chromosome"/>
</dbReference>
<dbReference type="GO" id="GO:0005829">
    <property type="term" value="C:cytosol"/>
    <property type="evidence" value="ECO:0007669"/>
    <property type="project" value="TreeGrafter"/>
</dbReference>
<dbReference type="GO" id="GO:0003723">
    <property type="term" value="F:RNA binding"/>
    <property type="evidence" value="ECO:0007669"/>
    <property type="project" value="UniProtKB-UniRule"/>
</dbReference>
<dbReference type="GO" id="GO:0006353">
    <property type="term" value="P:DNA-templated transcription termination"/>
    <property type="evidence" value="ECO:0007669"/>
    <property type="project" value="UniProtKB-UniRule"/>
</dbReference>
<dbReference type="GO" id="GO:0031564">
    <property type="term" value="P:transcription antitermination"/>
    <property type="evidence" value="ECO:0007669"/>
    <property type="project" value="UniProtKB-KW"/>
</dbReference>
<dbReference type="Gene3D" id="1.10.940.10">
    <property type="entry name" value="NusB-like"/>
    <property type="match status" value="1"/>
</dbReference>
<dbReference type="HAMAP" id="MF_00073">
    <property type="entry name" value="NusB"/>
    <property type="match status" value="1"/>
</dbReference>
<dbReference type="InterPro" id="IPR035926">
    <property type="entry name" value="NusB-like_sf"/>
</dbReference>
<dbReference type="InterPro" id="IPR011605">
    <property type="entry name" value="NusB_fam"/>
</dbReference>
<dbReference type="InterPro" id="IPR006027">
    <property type="entry name" value="NusB_RsmB_TIM44"/>
</dbReference>
<dbReference type="NCBIfam" id="TIGR01951">
    <property type="entry name" value="nusB"/>
    <property type="match status" value="1"/>
</dbReference>
<dbReference type="PANTHER" id="PTHR11078:SF3">
    <property type="entry name" value="ANTITERMINATION NUSB DOMAIN-CONTAINING PROTEIN"/>
    <property type="match status" value="1"/>
</dbReference>
<dbReference type="PANTHER" id="PTHR11078">
    <property type="entry name" value="N UTILIZATION SUBSTANCE PROTEIN B-RELATED"/>
    <property type="match status" value="1"/>
</dbReference>
<dbReference type="Pfam" id="PF01029">
    <property type="entry name" value="NusB"/>
    <property type="match status" value="1"/>
</dbReference>
<dbReference type="SUPFAM" id="SSF48013">
    <property type="entry name" value="NusB-like"/>
    <property type="match status" value="1"/>
</dbReference>
<sequence>MKTARRRSRELAVQAVYQSLINRTAAPEIAKNIREMPDFAKADEELFNKLFFGTQTNAAEYIRQIRPLLDRDEKDLNPIERAVLLTACHELSAMPETPYPVIINEAIEVTKTFGGTDGHKFVNGILDKLAAQIRPDEPKRR</sequence>
<comment type="function">
    <text evidence="1">Involved in transcription antitermination. Required for transcription of ribosomal RNA (rRNA) genes. Binds specifically to the boxA antiterminator sequence of the ribosomal RNA (rrn) operons.</text>
</comment>
<comment type="similarity">
    <text evidence="1">Belongs to the NusB family.</text>
</comment>
<name>NUSB_NEIMA</name>
<feature type="chain" id="PRO_0000176558" description="Transcription antitermination protein NusB">
    <location>
        <begin position="1"/>
        <end position="141"/>
    </location>
</feature>
<keyword id="KW-0694">RNA-binding</keyword>
<keyword id="KW-0804">Transcription</keyword>
<keyword id="KW-0889">Transcription antitermination</keyword>
<keyword id="KW-0805">Transcription regulation</keyword>
<organism>
    <name type="scientific">Neisseria meningitidis serogroup A / serotype 4A (strain DSM 15465 / Z2491)</name>
    <dbReference type="NCBI Taxonomy" id="122587"/>
    <lineage>
        <taxon>Bacteria</taxon>
        <taxon>Pseudomonadati</taxon>
        <taxon>Pseudomonadota</taxon>
        <taxon>Betaproteobacteria</taxon>
        <taxon>Neisseriales</taxon>
        <taxon>Neisseriaceae</taxon>
        <taxon>Neisseria</taxon>
    </lineage>
</organism>
<gene>
    <name evidence="1" type="primary">nusB</name>
    <name type="ordered locus">NMA0885</name>
</gene>
<evidence type="ECO:0000255" key="1">
    <source>
        <dbReference type="HAMAP-Rule" id="MF_00073"/>
    </source>
</evidence>